<comment type="function">
    <text evidence="1">Bifunctional nuclease with both RNase and DNase activities. Involved in basal defense response. Participates in abscisic acid-derived callose deposition following infection by a necrotrophic pathogen (By similarity).</text>
</comment>
<comment type="subcellular location">
    <subcellularLocation>
        <location evidence="1">Nucleus</location>
    </subcellularLocation>
</comment>
<comment type="similarity">
    <text evidence="2">Belongs to the bifunctional nuclease family.</text>
</comment>
<dbReference type="EC" id="3.1.-.-"/>
<dbReference type="EMBL" id="CM000126">
    <property type="protein sequence ID" value="EEC71344.1"/>
    <property type="molecule type" value="Genomic_DNA"/>
</dbReference>
<dbReference type="SMR" id="B8A8D2"/>
<dbReference type="STRING" id="39946.B8A8D2"/>
<dbReference type="EnsemblPlants" id="BGIOSGA000953-TA">
    <property type="protein sequence ID" value="BGIOSGA000953-PA"/>
    <property type="gene ID" value="BGIOSGA000953"/>
</dbReference>
<dbReference type="Gramene" id="BGIOSGA000953-TA">
    <property type="protein sequence ID" value="BGIOSGA000953-PA"/>
    <property type="gene ID" value="BGIOSGA000953"/>
</dbReference>
<dbReference type="HOGENOM" id="CLU_050306_1_0_1"/>
<dbReference type="OMA" id="MRRMACG"/>
<dbReference type="Proteomes" id="UP000007015">
    <property type="component" value="Chromosome 1"/>
</dbReference>
<dbReference type="GO" id="GO:0005634">
    <property type="term" value="C:nucleus"/>
    <property type="evidence" value="ECO:0007669"/>
    <property type="project" value="UniProtKB-SubCell"/>
</dbReference>
<dbReference type="GO" id="GO:0030891">
    <property type="term" value="C:VCB complex"/>
    <property type="evidence" value="ECO:0007669"/>
    <property type="project" value="TreeGrafter"/>
</dbReference>
<dbReference type="GO" id="GO:0004518">
    <property type="term" value="F:nuclease activity"/>
    <property type="evidence" value="ECO:0007669"/>
    <property type="project" value="UniProtKB-KW"/>
</dbReference>
<dbReference type="GO" id="GO:0016567">
    <property type="term" value="P:protein ubiquitination"/>
    <property type="evidence" value="ECO:0007669"/>
    <property type="project" value="TreeGrafter"/>
</dbReference>
<dbReference type="Gene3D" id="3.10.690.10">
    <property type="entry name" value="Bifunctional nuclease domain"/>
    <property type="match status" value="1"/>
</dbReference>
<dbReference type="InterPro" id="IPR036104">
    <property type="entry name" value="BFN_sf"/>
</dbReference>
<dbReference type="InterPro" id="IPR003729">
    <property type="entry name" value="Bi_nuclease_dom"/>
</dbReference>
<dbReference type="PANTHER" id="PTHR15160:SF13">
    <property type="entry name" value="BIFUNCTIONAL NUCLEASE 1"/>
    <property type="match status" value="1"/>
</dbReference>
<dbReference type="PANTHER" id="PTHR15160">
    <property type="entry name" value="VON HIPPEL-LINDAU PROTEIN"/>
    <property type="match status" value="1"/>
</dbReference>
<dbReference type="Pfam" id="PF02577">
    <property type="entry name" value="BFN_dom"/>
    <property type="match status" value="1"/>
</dbReference>
<dbReference type="SUPFAM" id="SSF103256">
    <property type="entry name" value="Hypothetical protein TM0160"/>
    <property type="match status" value="1"/>
</dbReference>
<dbReference type="PROSITE" id="PS51658">
    <property type="entry name" value="BFN"/>
    <property type="match status" value="1"/>
</dbReference>
<gene>
    <name type="primary">BBD1</name>
    <name type="ORF">OsI_03413</name>
</gene>
<proteinExistence type="inferred from homology"/>
<name>BBD1_ORYSI</name>
<evidence type="ECO:0000250" key="1"/>
<evidence type="ECO:0000305" key="2"/>
<reference key="1">
    <citation type="journal article" date="2005" name="PLoS Biol.">
        <title>The genomes of Oryza sativa: a history of duplications.</title>
        <authorList>
            <person name="Yu J."/>
            <person name="Wang J."/>
            <person name="Lin W."/>
            <person name="Li S."/>
            <person name="Li H."/>
            <person name="Zhou J."/>
            <person name="Ni P."/>
            <person name="Dong W."/>
            <person name="Hu S."/>
            <person name="Zeng C."/>
            <person name="Zhang J."/>
            <person name="Zhang Y."/>
            <person name="Li R."/>
            <person name="Xu Z."/>
            <person name="Li S."/>
            <person name="Li X."/>
            <person name="Zheng H."/>
            <person name="Cong L."/>
            <person name="Lin L."/>
            <person name="Yin J."/>
            <person name="Geng J."/>
            <person name="Li G."/>
            <person name="Shi J."/>
            <person name="Liu J."/>
            <person name="Lv H."/>
            <person name="Li J."/>
            <person name="Wang J."/>
            <person name="Deng Y."/>
            <person name="Ran L."/>
            <person name="Shi X."/>
            <person name="Wang X."/>
            <person name="Wu Q."/>
            <person name="Li C."/>
            <person name="Ren X."/>
            <person name="Wang J."/>
            <person name="Wang X."/>
            <person name="Li D."/>
            <person name="Liu D."/>
            <person name="Zhang X."/>
            <person name="Ji Z."/>
            <person name="Zhao W."/>
            <person name="Sun Y."/>
            <person name="Zhang Z."/>
            <person name="Bao J."/>
            <person name="Han Y."/>
            <person name="Dong L."/>
            <person name="Ji J."/>
            <person name="Chen P."/>
            <person name="Wu S."/>
            <person name="Liu J."/>
            <person name="Xiao Y."/>
            <person name="Bu D."/>
            <person name="Tan J."/>
            <person name="Yang L."/>
            <person name="Ye C."/>
            <person name="Zhang J."/>
            <person name="Xu J."/>
            <person name="Zhou Y."/>
            <person name="Yu Y."/>
            <person name="Zhang B."/>
            <person name="Zhuang S."/>
            <person name="Wei H."/>
            <person name="Liu B."/>
            <person name="Lei M."/>
            <person name="Yu H."/>
            <person name="Li Y."/>
            <person name="Xu H."/>
            <person name="Wei S."/>
            <person name="He X."/>
            <person name="Fang L."/>
            <person name="Zhang Z."/>
            <person name="Zhang Y."/>
            <person name="Huang X."/>
            <person name="Su Z."/>
            <person name="Tong W."/>
            <person name="Li J."/>
            <person name="Tong Z."/>
            <person name="Li S."/>
            <person name="Ye J."/>
            <person name="Wang L."/>
            <person name="Fang L."/>
            <person name="Lei T."/>
            <person name="Chen C.-S."/>
            <person name="Chen H.-C."/>
            <person name="Xu Z."/>
            <person name="Li H."/>
            <person name="Huang H."/>
            <person name="Zhang F."/>
            <person name="Xu H."/>
            <person name="Li N."/>
            <person name="Zhao C."/>
            <person name="Li S."/>
            <person name="Dong L."/>
            <person name="Huang Y."/>
            <person name="Li L."/>
            <person name="Xi Y."/>
            <person name="Qi Q."/>
            <person name="Li W."/>
            <person name="Zhang B."/>
            <person name="Hu W."/>
            <person name="Zhang Y."/>
            <person name="Tian X."/>
            <person name="Jiao Y."/>
            <person name="Liang X."/>
            <person name="Jin J."/>
            <person name="Gao L."/>
            <person name="Zheng W."/>
            <person name="Hao B."/>
            <person name="Liu S.-M."/>
            <person name="Wang W."/>
            <person name="Yuan L."/>
            <person name="Cao M."/>
            <person name="McDermott J."/>
            <person name="Samudrala R."/>
            <person name="Wang J."/>
            <person name="Wong G.K.-S."/>
            <person name="Yang H."/>
        </authorList>
    </citation>
    <scope>NUCLEOTIDE SEQUENCE [LARGE SCALE GENOMIC DNA]</scope>
    <source>
        <strain>cv. 93-11</strain>
    </source>
</reference>
<organism>
    <name type="scientific">Oryza sativa subsp. indica</name>
    <name type="common">Rice</name>
    <dbReference type="NCBI Taxonomy" id="39946"/>
    <lineage>
        <taxon>Eukaryota</taxon>
        <taxon>Viridiplantae</taxon>
        <taxon>Streptophyta</taxon>
        <taxon>Embryophyta</taxon>
        <taxon>Tracheophyta</taxon>
        <taxon>Spermatophyta</taxon>
        <taxon>Magnoliopsida</taxon>
        <taxon>Liliopsida</taxon>
        <taxon>Poales</taxon>
        <taxon>Poaceae</taxon>
        <taxon>BOP clade</taxon>
        <taxon>Oryzoideae</taxon>
        <taxon>Oryzeae</taxon>
        <taxon>Oryzinae</taxon>
        <taxon>Oryza</taxon>
        <taxon>Oryza sativa</taxon>
    </lineage>
</organism>
<keyword id="KW-0378">Hydrolase</keyword>
<keyword id="KW-0540">Nuclease</keyword>
<keyword id="KW-0539">Nucleus</keyword>
<keyword id="KW-1185">Reference proteome</keyword>
<sequence>MEIINGPVLPRYAAPATGALTSDAKISGQLLRRVHLRRRACGLQGDHYRAARRFFGFPSERHARSGWVWPVCCSYGSSSDGDGAAAADYDASGEEFVNSSVMEAVELRSVSDGFVIKMRDGKNLRCVQNNPRVLRLRDSAPHHAIVLKMEDGSDLLLPIIVMETPSIMLLAALRNIRIPRPTIYNVVKEMTERMGYAVRLVRITEMVHDAYYSRLYLAKIGNEEETISLDLKPSDAINIAFRCKVPIQVNRRIAYNNGLKVVQPTPSESYVSSDQFQCTRLDRPDDQPCFEAQEFDLVRNMLVAAVEERYKDAAQYRDQLFMFRAKKKNMI</sequence>
<protein>
    <recommendedName>
        <fullName>Bifunctional nuclease 1</fullName>
        <ecNumber>3.1.-.-</ecNumber>
    </recommendedName>
</protein>
<accession>B8A8D2</accession>
<feature type="chain" id="PRO_0000419551" description="Bifunctional nuclease 1">
    <location>
        <begin position="1"/>
        <end position="331"/>
    </location>
</feature>
<feature type="domain" description="BFN">
    <location>
        <begin position="126"/>
        <end position="261"/>
    </location>
</feature>
<feature type="domain" description="UVR">
    <location>
        <begin position="291"/>
        <end position="326"/>
    </location>
</feature>